<keyword id="KW-0963">Cytoplasm</keyword>
<keyword id="KW-0460">Magnesium</keyword>
<keyword id="KW-0479">Metal-binding</keyword>
<keyword id="KW-0566">Pantothenate biosynthesis</keyword>
<keyword id="KW-1185">Reference proteome</keyword>
<keyword id="KW-0808">Transferase</keyword>
<protein>
    <recommendedName>
        <fullName evidence="1">3-methyl-2-oxobutanoate hydroxymethyltransferase</fullName>
        <ecNumber evidence="1">2.1.2.11</ecNumber>
    </recommendedName>
    <alternativeName>
        <fullName evidence="1">Ketopantoate hydroxymethyltransferase</fullName>
        <shortName evidence="1">KPHMT</shortName>
    </alternativeName>
</protein>
<proteinExistence type="inferred from homology"/>
<organism>
    <name type="scientific">Synechococcus elongatus (strain ATCC 33912 / PCC 7942 / FACHB-805)</name>
    <name type="common">Anacystis nidulans R2</name>
    <dbReference type="NCBI Taxonomy" id="1140"/>
    <lineage>
        <taxon>Bacteria</taxon>
        <taxon>Bacillati</taxon>
        <taxon>Cyanobacteriota</taxon>
        <taxon>Cyanophyceae</taxon>
        <taxon>Synechococcales</taxon>
        <taxon>Synechococcaceae</taxon>
        <taxon>Synechococcus</taxon>
    </lineage>
</organism>
<accession>Q31KK8</accession>
<name>PANB_SYNE7</name>
<gene>
    <name evidence="1" type="primary">panB</name>
    <name type="ordered locus">Synpcc7942_2381</name>
</gene>
<reference key="1">
    <citation type="submission" date="2005-08" db="EMBL/GenBank/DDBJ databases">
        <title>Complete sequence of chromosome 1 of Synechococcus elongatus PCC 7942.</title>
        <authorList>
            <consortium name="US DOE Joint Genome Institute"/>
            <person name="Copeland A."/>
            <person name="Lucas S."/>
            <person name="Lapidus A."/>
            <person name="Barry K."/>
            <person name="Detter J.C."/>
            <person name="Glavina T."/>
            <person name="Hammon N."/>
            <person name="Israni S."/>
            <person name="Pitluck S."/>
            <person name="Schmutz J."/>
            <person name="Larimer F."/>
            <person name="Land M."/>
            <person name="Kyrpides N."/>
            <person name="Lykidis A."/>
            <person name="Golden S."/>
            <person name="Richardson P."/>
        </authorList>
    </citation>
    <scope>NUCLEOTIDE SEQUENCE [LARGE SCALE GENOMIC DNA]</scope>
    <source>
        <strain>ATCC 33912 / PCC 7942 / FACHB-805</strain>
    </source>
</reference>
<evidence type="ECO:0000255" key="1">
    <source>
        <dbReference type="HAMAP-Rule" id="MF_00156"/>
    </source>
</evidence>
<sequence>MPITPRHLRQWKQQGRPIVALTAWDFAIASILDEAGIDLVLVGDSLAMVALGHPTTLPLSLEDMIHHVQAVQRGCRNALIVSDLPFLSYQTSPEDAILAAGQLLKVTEAQAVKLEGGYPRLLETVQRLVEVGIPVMGHVGLTPQSVRQLGYRQQGQTPEAQQQILDQALALEAAGAFAIVLEHIPDRLAAMITAKLSIPTIGIGAGPNCDGQILVTADLLGLTPSQPPFAPAYLNLRQAIGSAVQRYAREVRDRQFLQSQPAEQEPLS</sequence>
<feature type="chain" id="PRO_0000297393" description="3-methyl-2-oxobutanoate hydroxymethyltransferase">
    <location>
        <begin position="1"/>
        <end position="268"/>
    </location>
</feature>
<feature type="active site" description="Proton acceptor" evidence="1">
    <location>
        <position position="182"/>
    </location>
</feature>
<feature type="binding site" evidence="1">
    <location>
        <begin position="44"/>
        <end position="45"/>
    </location>
    <ligand>
        <name>3-methyl-2-oxobutanoate</name>
        <dbReference type="ChEBI" id="CHEBI:11851"/>
    </ligand>
</feature>
<feature type="binding site" evidence="1">
    <location>
        <position position="44"/>
    </location>
    <ligand>
        <name>Mg(2+)</name>
        <dbReference type="ChEBI" id="CHEBI:18420"/>
    </ligand>
</feature>
<feature type="binding site" evidence="1">
    <location>
        <position position="83"/>
    </location>
    <ligand>
        <name>3-methyl-2-oxobutanoate</name>
        <dbReference type="ChEBI" id="CHEBI:11851"/>
    </ligand>
</feature>
<feature type="binding site" evidence="1">
    <location>
        <position position="83"/>
    </location>
    <ligand>
        <name>Mg(2+)</name>
        <dbReference type="ChEBI" id="CHEBI:18420"/>
    </ligand>
</feature>
<feature type="binding site" evidence="1">
    <location>
        <position position="113"/>
    </location>
    <ligand>
        <name>3-methyl-2-oxobutanoate</name>
        <dbReference type="ChEBI" id="CHEBI:11851"/>
    </ligand>
</feature>
<feature type="binding site" evidence="1">
    <location>
        <position position="115"/>
    </location>
    <ligand>
        <name>Mg(2+)</name>
        <dbReference type="ChEBI" id="CHEBI:18420"/>
    </ligand>
</feature>
<dbReference type="EC" id="2.1.2.11" evidence="1"/>
<dbReference type="EMBL" id="CP000100">
    <property type="protein sequence ID" value="ABB58411.1"/>
    <property type="molecule type" value="Genomic_DNA"/>
</dbReference>
<dbReference type="RefSeq" id="WP_011244034.1">
    <property type="nucleotide sequence ID" value="NZ_JACJTX010000001.1"/>
</dbReference>
<dbReference type="SMR" id="Q31KK8"/>
<dbReference type="STRING" id="1140.Synpcc7942_2381"/>
<dbReference type="PaxDb" id="1140-Synpcc7942_2381"/>
<dbReference type="GeneID" id="72431270"/>
<dbReference type="KEGG" id="syf:Synpcc7942_2381"/>
<dbReference type="eggNOG" id="COG0413">
    <property type="taxonomic scope" value="Bacteria"/>
</dbReference>
<dbReference type="HOGENOM" id="CLU_036645_1_0_3"/>
<dbReference type="OrthoDB" id="9781789at2"/>
<dbReference type="BioCyc" id="SYNEL:SYNPCC7942_2381-MONOMER"/>
<dbReference type="UniPathway" id="UPA00028">
    <property type="reaction ID" value="UER00003"/>
</dbReference>
<dbReference type="Proteomes" id="UP000889800">
    <property type="component" value="Chromosome"/>
</dbReference>
<dbReference type="GO" id="GO:0005737">
    <property type="term" value="C:cytoplasm"/>
    <property type="evidence" value="ECO:0007669"/>
    <property type="project" value="UniProtKB-SubCell"/>
</dbReference>
<dbReference type="GO" id="GO:0003864">
    <property type="term" value="F:3-methyl-2-oxobutanoate hydroxymethyltransferase activity"/>
    <property type="evidence" value="ECO:0007669"/>
    <property type="project" value="UniProtKB-UniRule"/>
</dbReference>
<dbReference type="GO" id="GO:0000287">
    <property type="term" value="F:magnesium ion binding"/>
    <property type="evidence" value="ECO:0007669"/>
    <property type="project" value="TreeGrafter"/>
</dbReference>
<dbReference type="GO" id="GO:0015940">
    <property type="term" value="P:pantothenate biosynthetic process"/>
    <property type="evidence" value="ECO:0007669"/>
    <property type="project" value="UniProtKB-UniRule"/>
</dbReference>
<dbReference type="CDD" id="cd06557">
    <property type="entry name" value="KPHMT-like"/>
    <property type="match status" value="1"/>
</dbReference>
<dbReference type="FunFam" id="3.20.20.60:FF:000003">
    <property type="entry name" value="3-methyl-2-oxobutanoate hydroxymethyltransferase"/>
    <property type="match status" value="1"/>
</dbReference>
<dbReference type="Gene3D" id="3.20.20.60">
    <property type="entry name" value="Phosphoenolpyruvate-binding domains"/>
    <property type="match status" value="1"/>
</dbReference>
<dbReference type="HAMAP" id="MF_00156">
    <property type="entry name" value="PanB"/>
    <property type="match status" value="1"/>
</dbReference>
<dbReference type="InterPro" id="IPR003700">
    <property type="entry name" value="Pantoate_hydroxy_MeTrfase"/>
</dbReference>
<dbReference type="InterPro" id="IPR015813">
    <property type="entry name" value="Pyrv/PenolPyrv_kinase-like_dom"/>
</dbReference>
<dbReference type="InterPro" id="IPR040442">
    <property type="entry name" value="Pyrv_kinase-like_dom_sf"/>
</dbReference>
<dbReference type="NCBIfam" id="TIGR00222">
    <property type="entry name" value="panB"/>
    <property type="match status" value="1"/>
</dbReference>
<dbReference type="NCBIfam" id="NF001452">
    <property type="entry name" value="PRK00311.1"/>
    <property type="match status" value="1"/>
</dbReference>
<dbReference type="PANTHER" id="PTHR20881">
    <property type="entry name" value="3-METHYL-2-OXOBUTANOATE HYDROXYMETHYLTRANSFERASE"/>
    <property type="match status" value="1"/>
</dbReference>
<dbReference type="PANTHER" id="PTHR20881:SF0">
    <property type="entry name" value="3-METHYL-2-OXOBUTANOATE HYDROXYMETHYLTRANSFERASE"/>
    <property type="match status" value="1"/>
</dbReference>
<dbReference type="Pfam" id="PF02548">
    <property type="entry name" value="Pantoate_transf"/>
    <property type="match status" value="1"/>
</dbReference>
<dbReference type="PIRSF" id="PIRSF000388">
    <property type="entry name" value="Pantoate_hydroxy_MeTrfase"/>
    <property type="match status" value="1"/>
</dbReference>
<dbReference type="SUPFAM" id="SSF51621">
    <property type="entry name" value="Phosphoenolpyruvate/pyruvate domain"/>
    <property type="match status" value="1"/>
</dbReference>
<comment type="function">
    <text evidence="1">Catalyzes the reversible reaction in which hydroxymethyl group from 5,10-methylenetetrahydrofolate is transferred onto alpha-ketoisovalerate to form ketopantoate.</text>
</comment>
<comment type="catalytic activity">
    <reaction evidence="1">
        <text>3-methyl-2-oxobutanoate + (6R)-5,10-methylene-5,6,7,8-tetrahydrofolate + H2O = 2-dehydropantoate + (6S)-5,6,7,8-tetrahydrofolate</text>
        <dbReference type="Rhea" id="RHEA:11824"/>
        <dbReference type="ChEBI" id="CHEBI:11561"/>
        <dbReference type="ChEBI" id="CHEBI:11851"/>
        <dbReference type="ChEBI" id="CHEBI:15377"/>
        <dbReference type="ChEBI" id="CHEBI:15636"/>
        <dbReference type="ChEBI" id="CHEBI:57453"/>
        <dbReference type="EC" id="2.1.2.11"/>
    </reaction>
</comment>
<comment type="cofactor">
    <cofactor evidence="1">
        <name>Mg(2+)</name>
        <dbReference type="ChEBI" id="CHEBI:18420"/>
    </cofactor>
    <text evidence="1">Binds 1 Mg(2+) ion per subunit.</text>
</comment>
<comment type="pathway">
    <text evidence="1">Cofactor biosynthesis; (R)-pantothenate biosynthesis; (R)-pantoate from 3-methyl-2-oxobutanoate: step 1/2.</text>
</comment>
<comment type="subunit">
    <text evidence="1">Homodecamer; pentamer of dimers.</text>
</comment>
<comment type="subcellular location">
    <subcellularLocation>
        <location evidence="1">Cytoplasm</location>
    </subcellularLocation>
</comment>
<comment type="similarity">
    <text evidence="1">Belongs to the PanB family.</text>
</comment>